<feature type="chain" id="PRO_1000145374" description="Peptide methionine sulfoxide reductase MsrB">
    <location>
        <begin position="1"/>
        <end position="137"/>
    </location>
</feature>
<feature type="domain" description="MsrB" evidence="2">
    <location>
        <begin position="7"/>
        <end position="129"/>
    </location>
</feature>
<feature type="active site" description="Nucleophile" evidence="2">
    <location>
        <position position="118"/>
    </location>
</feature>
<feature type="binding site" evidence="2">
    <location>
        <position position="46"/>
    </location>
    <ligand>
        <name>Zn(2+)</name>
        <dbReference type="ChEBI" id="CHEBI:29105"/>
    </ligand>
</feature>
<feature type="binding site" evidence="2">
    <location>
        <position position="49"/>
    </location>
    <ligand>
        <name>Zn(2+)</name>
        <dbReference type="ChEBI" id="CHEBI:29105"/>
    </ligand>
</feature>
<feature type="binding site" evidence="2">
    <location>
        <position position="95"/>
    </location>
    <ligand>
        <name>Zn(2+)</name>
        <dbReference type="ChEBI" id="CHEBI:29105"/>
    </ligand>
</feature>
<feature type="binding site" evidence="2">
    <location>
        <position position="98"/>
    </location>
    <ligand>
        <name>Zn(2+)</name>
        <dbReference type="ChEBI" id="CHEBI:29105"/>
    </ligand>
</feature>
<proteinExistence type="inferred from homology"/>
<organism>
    <name type="scientific">Klebsiella pneumoniae (strain 342)</name>
    <dbReference type="NCBI Taxonomy" id="507522"/>
    <lineage>
        <taxon>Bacteria</taxon>
        <taxon>Pseudomonadati</taxon>
        <taxon>Pseudomonadota</taxon>
        <taxon>Gammaproteobacteria</taxon>
        <taxon>Enterobacterales</taxon>
        <taxon>Enterobacteriaceae</taxon>
        <taxon>Klebsiella/Raoultella group</taxon>
        <taxon>Klebsiella</taxon>
        <taxon>Klebsiella pneumoniae complex</taxon>
    </lineage>
</organism>
<comment type="catalytic activity">
    <reaction evidence="1">
        <text>L-methionyl-[protein] + [thioredoxin]-disulfide + H2O = L-methionyl-(R)-S-oxide-[protein] + [thioredoxin]-dithiol</text>
        <dbReference type="Rhea" id="RHEA:24164"/>
        <dbReference type="Rhea" id="RHEA-COMP:10698"/>
        <dbReference type="Rhea" id="RHEA-COMP:10700"/>
        <dbReference type="Rhea" id="RHEA-COMP:12313"/>
        <dbReference type="Rhea" id="RHEA-COMP:12314"/>
        <dbReference type="ChEBI" id="CHEBI:15377"/>
        <dbReference type="ChEBI" id="CHEBI:16044"/>
        <dbReference type="ChEBI" id="CHEBI:29950"/>
        <dbReference type="ChEBI" id="CHEBI:45764"/>
        <dbReference type="ChEBI" id="CHEBI:50058"/>
        <dbReference type="EC" id="1.8.4.12"/>
    </reaction>
</comment>
<comment type="cofactor">
    <cofactor evidence="1">
        <name>Zn(2+)</name>
        <dbReference type="ChEBI" id="CHEBI:29105"/>
    </cofactor>
    <text evidence="1">Binds 1 zinc ion per subunit. The zinc ion is important for the structural integrity of the protein.</text>
</comment>
<comment type="similarity">
    <text evidence="1">Belongs to the MsrB Met sulfoxide reductase family.</text>
</comment>
<gene>
    <name evidence="1" type="primary">msrB</name>
    <name type="ordered locus">KPK_3246</name>
</gene>
<accession>B5XS71</accession>
<name>MSRB_KLEP3</name>
<reference key="1">
    <citation type="journal article" date="2008" name="PLoS Genet.">
        <title>Complete genome sequence of the N2-fixing broad host range endophyte Klebsiella pneumoniae 342 and virulence predictions verified in mice.</title>
        <authorList>
            <person name="Fouts D.E."/>
            <person name="Tyler H.L."/>
            <person name="DeBoy R.T."/>
            <person name="Daugherty S."/>
            <person name="Ren Q."/>
            <person name="Badger J.H."/>
            <person name="Durkin A.S."/>
            <person name="Huot H."/>
            <person name="Shrivastava S."/>
            <person name="Kothari S."/>
            <person name="Dodson R.J."/>
            <person name="Mohamoud Y."/>
            <person name="Khouri H."/>
            <person name="Roesch L.F.W."/>
            <person name="Krogfelt K.A."/>
            <person name="Struve C."/>
            <person name="Triplett E.W."/>
            <person name="Methe B.A."/>
        </authorList>
    </citation>
    <scope>NUCLEOTIDE SEQUENCE [LARGE SCALE GENOMIC DNA]</scope>
    <source>
        <strain>342</strain>
    </source>
</reference>
<sequence>MANKPSPGELKNGLSEMQFYVTQHHGTEPPFTGRLLHNKKNGVYHCLVCDAPLFNSQTKYDSGCGWPSFYEPVSDEAIRYLTDNSHGMQRIEIRCGNCDAHLGHVFPDGPQPTGERYCVNSASLSFTDEQNGEQIKG</sequence>
<evidence type="ECO:0000255" key="1">
    <source>
        <dbReference type="HAMAP-Rule" id="MF_01400"/>
    </source>
</evidence>
<evidence type="ECO:0000255" key="2">
    <source>
        <dbReference type="PROSITE-ProRule" id="PRU01126"/>
    </source>
</evidence>
<dbReference type="EC" id="1.8.4.12" evidence="1"/>
<dbReference type="EMBL" id="CP000964">
    <property type="protein sequence ID" value="ACI10765.1"/>
    <property type="molecule type" value="Genomic_DNA"/>
</dbReference>
<dbReference type="SMR" id="B5XS71"/>
<dbReference type="KEGG" id="kpe:KPK_3246"/>
<dbReference type="HOGENOM" id="CLU_031040_8_5_6"/>
<dbReference type="Proteomes" id="UP000001734">
    <property type="component" value="Chromosome"/>
</dbReference>
<dbReference type="GO" id="GO:0005737">
    <property type="term" value="C:cytoplasm"/>
    <property type="evidence" value="ECO:0007669"/>
    <property type="project" value="TreeGrafter"/>
</dbReference>
<dbReference type="GO" id="GO:0033743">
    <property type="term" value="F:peptide-methionine (R)-S-oxide reductase activity"/>
    <property type="evidence" value="ECO:0007669"/>
    <property type="project" value="UniProtKB-UniRule"/>
</dbReference>
<dbReference type="GO" id="GO:0008270">
    <property type="term" value="F:zinc ion binding"/>
    <property type="evidence" value="ECO:0007669"/>
    <property type="project" value="UniProtKB-UniRule"/>
</dbReference>
<dbReference type="GO" id="GO:0030091">
    <property type="term" value="P:protein repair"/>
    <property type="evidence" value="ECO:0007669"/>
    <property type="project" value="InterPro"/>
</dbReference>
<dbReference type="GO" id="GO:0006979">
    <property type="term" value="P:response to oxidative stress"/>
    <property type="evidence" value="ECO:0007669"/>
    <property type="project" value="InterPro"/>
</dbReference>
<dbReference type="FunFam" id="2.170.150.20:FF:000001">
    <property type="entry name" value="Peptide methionine sulfoxide reductase MsrB"/>
    <property type="match status" value="1"/>
</dbReference>
<dbReference type="Gene3D" id="2.170.150.20">
    <property type="entry name" value="Peptide methionine sulfoxide reductase"/>
    <property type="match status" value="1"/>
</dbReference>
<dbReference type="HAMAP" id="MF_01400">
    <property type="entry name" value="MsrB"/>
    <property type="match status" value="1"/>
</dbReference>
<dbReference type="InterPro" id="IPR028427">
    <property type="entry name" value="Met_Sox_Rdtase_MsrB"/>
</dbReference>
<dbReference type="InterPro" id="IPR002579">
    <property type="entry name" value="Met_Sox_Rdtase_MsrB_dom"/>
</dbReference>
<dbReference type="InterPro" id="IPR011057">
    <property type="entry name" value="Mss4-like_sf"/>
</dbReference>
<dbReference type="NCBIfam" id="TIGR00357">
    <property type="entry name" value="peptide-methionine (R)-S-oxide reductase MsrB"/>
    <property type="match status" value="1"/>
</dbReference>
<dbReference type="PANTHER" id="PTHR10173">
    <property type="entry name" value="METHIONINE SULFOXIDE REDUCTASE"/>
    <property type="match status" value="1"/>
</dbReference>
<dbReference type="PANTHER" id="PTHR10173:SF52">
    <property type="entry name" value="METHIONINE-R-SULFOXIDE REDUCTASE B1"/>
    <property type="match status" value="1"/>
</dbReference>
<dbReference type="Pfam" id="PF01641">
    <property type="entry name" value="SelR"/>
    <property type="match status" value="1"/>
</dbReference>
<dbReference type="SUPFAM" id="SSF51316">
    <property type="entry name" value="Mss4-like"/>
    <property type="match status" value="1"/>
</dbReference>
<dbReference type="PROSITE" id="PS51790">
    <property type="entry name" value="MSRB"/>
    <property type="match status" value="1"/>
</dbReference>
<protein>
    <recommendedName>
        <fullName evidence="1">Peptide methionine sulfoxide reductase MsrB</fullName>
        <ecNumber evidence="1">1.8.4.12</ecNumber>
    </recommendedName>
    <alternativeName>
        <fullName evidence="1">Peptide-methionine (R)-S-oxide reductase</fullName>
    </alternativeName>
</protein>
<keyword id="KW-0479">Metal-binding</keyword>
<keyword id="KW-0560">Oxidoreductase</keyword>
<keyword id="KW-0862">Zinc</keyword>